<feature type="transit peptide" description="Mitochondrion" evidence="2">
    <location>
        <begin position="1"/>
        <end position="21"/>
    </location>
</feature>
<feature type="chain" id="PRO_0000409643" description="Genetic interactor of prohibitins 3, mitochondrial">
    <location>
        <begin position="22"/>
        <end position="556"/>
    </location>
</feature>
<feature type="domain" description="CP-type G" evidence="3">
    <location>
        <begin position="113"/>
        <end position="305"/>
    </location>
</feature>
<name>GEP3_YEAS2</name>
<protein>
    <recommendedName>
        <fullName>Genetic interactor of prohibitins 3, mitochondrial</fullName>
    </recommendedName>
    <alternativeName>
        <fullName>Altered inheritance of mitochondria protein 40</fullName>
    </alternativeName>
    <alternativeName>
        <fullName>Found in mitochondrial proteome protein 38</fullName>
    </alternativeName>
</protein>
<proteinExistence type="inferred from homology"/>
<accession>C7GWH7</accession>
<reference key="1">
    <citation type="journal article" date="2009" name="Genome Res.">
        <title>Genome structure of a Saccharomyces cerevisiae strain widely used in bioethanol production.</title>
        <authorList>
            <person name="Argueso J.L."/>
            <person name="Carazzolle M.F."/>
            <person name="Mieczkowski P.A."/>
            <person name="Duarte F.M."/>
            <person name="Netto O.V.C."/>
            <person name="Missawa S.K."/>
            <person name="Galzerani F."/>
            <person name="Costa G.G.L."/>
            <person name="Vidal R.O."/>
            <person name="Noronha M.F."/>
            <person name="Dominska M."/>
            <person name="Andrietta M.G.S."/>
            <person name="Andrietta S.R."/>
            <person name="Cunha A.F."/>
            <person name="Gomes L.H."/>
            <person name="Tavares F.C.A."/>
            <person name="Alcarde A.R."/>
            <person name="Dietrich F.S."/>
            <person name="McCusker J.H."/>
            <person name="Petes T.D."/>
            <person name="Pereira G.A.G."/>
        </authorList>
    </citation>
    <scope>NUCLEOTIDE SEQUENCE [LARGE SCALE GENOMIC DNA]</scope>
    <source>
        <strain>JAY291</strain>
    </source>
</reference>
<keyword id="KW-0496">Mitochondrion</keyword>
<keyword id="KW-0809">Transit peptide</keyword>
<organism>
    <name type="scientific">Saccharomyces cerevisiae (strain JAY291)</name>
    <name type="common">Baker's yeast</name>
    <dbReference type="NCBI Taxonomy" id="574961"/>
    <lineage>
        <taxon>Eukaryota</taxon>
        <taxon>Fungi</taxon>
        <taxon>Dikarya</taxon>
        <taxon>Ascomycota</taxon>
        <taxon>Saccharomycotina</taxon>
        <taxon>Saccharomycetes</taxon>
        <taxon>Saccharomycetales</taxon>
        <taxon>Saccharomycetaceae</taxon>
        <taxon>Saccharomyces</taxon>
    </lineage>
</organism>
<comment type="function">
    <text evidence="1">Interacts genetically with prohibitins and thus may be involved in the mitochondrial lipid metabolism.</text>
</comment>
<comment type="subcellular location">
    <subcellularLocation>
        <location evidence="1">Mitochondrion</location>
    </subcellularLocation>
</comment>
<comment type="similarity">
    <text evidence="3">Belongs to the TRAFAC class YlqF/YawG GTPase family. GEP3 subfamily.</text>
</comment>
<gene>
    <name type="primary">GEP3</name>
    <name type="synonym">AIM40</name>
    <name type="synonym">FMP48</name>
    <name type="ORF">C1Q_04800</name>
</gene>
<evidence type="ECO:0000250" key="1"/>
<evidence type="ECO:0000255" key="2"/>
<evidence type="ECO:0000255" key="3">
    <source>
        <dbReference type="PROSITE-ProRule" id="PRU01058"/>
    </source>
</evidence>
<dbReference type="EMBL" id="ACFL01000381">
    <property type="protein sequence ID" value="EEU04852.1"/>
    <property type="molecule type" value="Genomic_DNA"/>
</dbReference>
<dbReference type="SMR" id="C7GWH7"/>
<dbReference type="Proteomes" id="UP000008073">
    <property type="component" value="Unassembled WGS sequence"/>
</dbReference>
<dbReference type="GO" id="GO:0005739">
    <property type="term" value="C:mitochondrion"/>
    <property type="evidence" value="ECO:0007669"/>
    <property type="project" value="UniProtKB-SubCell"/>
</dbReference>
<dbReference type="GO" id="GO:0005525">
    <property type="term" value="F:GTP binding"/>
    <property type="evidence" value="ECO:0007669"/>
    <property type="project" value="InterPro"/>
</dbReference>
<dbReference type="CDD" id="cd01855">
    <property type="entry name" value="YqeH"/>
    <property type="match status" value="1"/>
</dbReference>
<dbReference type="Gene3D" id="3.40.50.300">
    <property type="entry name" value="P-loop containing nucleotide triphosphate hydrolases"/>
    <property type="match status" value="1"/>
</dbReference>
<dbReference type="InterPro" id="IPR030378">
    <property type="entry name" value="G_CP_dom"/>
</dbReference>
<dbReference type="InterPro" id="IPR006073">
    <property type="entry name" value="GTP-bd"/>
</dbReference>
<dbReference type="InterPro" id="IPR050896">
    <property type="entry name" value="Mito_lipid_metab_GTPase"/>
</dbReference>
<dbReference type="InterPro" id="IPR027417">
    <property type="entry name" value="P-loop_NTPase"/>
</dbReference>
<dbReference type="PANTHER" id="PTHR46434">
    <property type="entry name" value="GENETIC INTERACTOR OF PROHIBITINS 3, MITOCHONDRIAL"/>
    <property type="match status" value="1"/>
</dbReference>
<dbReference type="PANTHER" id="PTHR46434:SF1">
    <property type="entry name" value="GENETIC INTERACTOR OF PROHIBITINS 3, MITOCHONDRIAL"/>
    <property type="match status" value="1"/>
</dbReference>
<dbReference type="Pfam" id="PF01926">
    <property type="entry name" value="MMR_HSR1"/>
    <property type="match status" value="1"/>
</dbReference>
<dbReference type="SUPFAM" id="SSF52540">
    <property type="entry name" value="P-loop containing nucleoside triphosphate hydrolases"/>
    <property type="match status" value="1"/>
</dbReference>
<dbReference type="PROSITE" id="PS51721">
    <property type="entry name" value="G_CP"/>
    <property type="match status" value="1"/>
</dbReference>
<sequence>MLNLCHALRGVRQFSCSVIVKVKCASCSIKLQDQDPSKPGYYTKPKSLPDSKLNPDLQDLKYLLFSQDIQLSKQAIQNDPDLKTKRDLLLRVICKRCSNALHHNNYNPEEFPESTLNDILNYVPRGSNVMHIVPFVEFPLHLDPNVLKRNDLDTTLVLTKSDQVFKDKNAVSKKVPIFMKQFLKNTLRIDSNKTFAISALKNWNISMFYNYFKNYTYLLGNPNVGKSTLINTLLQKYLGYKVKIDSTGKINSPSEEVMQEAFTNPKNFFKIQAAGVSHIPNLTRSVQAYQVGGKILFDLPGYSTSTSRLRLEEPIDERWLQRLRKTDLFNRKHIKQKTYESMKGTSQGGCYTVGGIFYLVPPKGSINQIVKYIPGPSKTFKNIEKGIDVFNSCNSSSGTHPLSRYCGIKSVICEKSQYKRYAIPPFIGSIEIVLKDIGYILLRTTGRYEFKGLHEIWIPRGIQVGIREPLENLIESGYQRYIETNGKESSCPRDRPIISSLYEMAPDEADTLNAVKKSYLEKTEKDLSARRFVDDDPYDLVQHLEKKKNPYWYYQW</sequence>